<organism>
    <name type="scientific">Methanocaldococcus jannaschii (strain ATCC 43067 / DSM 2661 / JAL-1 / JCM 10045 / NBRC 100440)</name>
    <name type="common">Methanococcus jannaschii</name>
    <dbReference type="NCBI Taxonomy" id="243232"/>
    <lineage>
        <taxon>Archaea</taxon>
        <taxon>Methanobacteriati</taxon>
        <taxon>Methanobacteriota</taxon>
        <taxon>Methanomada group</taxon>
        <taxon>Methanococci</taxon>
        <taxon>Methanococcales</taxon>
        <taxon>Methanocaldococcaceae</taxon>
        <taxon>Methanocaldococcus</taxon>
    </lineage>
</organism>
<feature type="chain" id="PRO_0000107206" description="Uncharacterized protein MJ1183">
    <location>
        <begin position="1"/>
        <end position="161"/>
    </location>
</feature>
<name>Y1183_METJA</name>
<gene>
    <name type="ordered locus">MJ1183</name>
</gene>
<evidence type="ECO:0000305" key="1"/>
<keyword id="KW-1185">Reference proteome</keyword>
<protein>
    <recommendedName>
        <fullName>Uncharacterized protein MJ1183</fullName>
    </recommendedName>
</protein>
<sequence length="161" mass="18310">MGDIMTLKLLKEENGLSPMLREFRTLVRDSNIEKVAFVGSVGVCQPFAELFGYAIRDKECYFIPDGDLNKVKKLVIKDIGMQMEDFENLNKVDAIVLFGGLAMPKYGVEVDKIKELINKLSPKKVIGVCFMSIFQKAGWDKEIDFDYLMDGFIKVSIYCKD</sequence>
<dbReference type="EMBL" id="L77117">
    <property type="protein sequence ID" value="AAB99184.1"/>
    <property type="molecule type" value="Genomic_DNA"/>
</dbReference>
<dbReference type="PIR" id="F64447">
    <property type="entry name" value="F64447"/>
</dbReference>
<dbReference type="SMR" id="Q58583"/>
<dbReference type="FunCoup" id="Q58583">
    <property type="interactions" value="8"/>
</dbReference>
<dbReference type="STRING" id="243232.MJ_1183"/>
<dbReference type="PaxDb" id="243232-MJ_1183"/>
<dbReference type="EnsemblBacteria" id="AAB99184">
    <property type="protein sequence ID" value="AAB99184"/>
    <property type="gene ID" value="MJ_1183"/>
</dbReference>
<dbReference type="KEGG" id="mja:MJ_1183"/>
<dbReference type="eggNOG" id="arCOG04847">
    <property type="taxonomic scope" value="Archaea"/>
</dbReference>
<dbReference type="HOGENOM" id="CLU_1682726_0_0_2"/>
<dbReference type="InParanoid" id="Q58583"/>
<dbReference type="PhylomeDB" id="Q58583"/>
<dbReference type="Proteomes" id="UP000000805">
    <property type="component" value="Chromosome"/>
</dbReference>
<dbReference type="Gene3D" id="3.40.50.2300">
    <property type="match status" value="1"/>
</dbReference>
<dbReference type="InterPro" id="IPR009183">
    <property type="entry name" value="UCP004962"/>
</dbReference>
<dbReference type="Pfam" id="PF09897">
    <property type="entry name" value="DUF2124"/>
    <property type="match status" value="1"/>
</dbReference>
<dbReference type="PIRSF" id="PIRSF004962">
    <property type="entry name" value="UCP004962"/>
    <property type="match status" value="1"/>
</dbReference>
<reference key="1">
    <citation type="journal article" date="1996" name="Science">
        <title>Complete genome sequence of the methanogenic archaeon, Methanococcus jannaschii.</title>
        <authorList>
            <person name="Bult C.J."/>
            <person name="White O."/>
            <person name="Olsen G.J."/>
            <person name="Zhou L."/>
            <person name="Fleischmann R.D."/>
            <person name="Sutton G.G."/>
            <person name="Blake J.A."/>
            <person name="FitzGerald L.M."/>
            <person name="Clayton R.A."/>
            <person name="Gocayne J.D."/>
            <person name="Kerlavage A.R."/>
            <person name="Dougherty B.A."/>
            <person name="Tomb J.-F."/>
            <person name="Adams M.D."/>
            <person name="Reich C.I."/>
            <person name="Overbeek R."/>
            <person name="Kirkness E.F."/>
            <person name="Weinstock K.G."/>
            <person name="Merrick J.M."/>
            <person name="Glodek A."/>
            <person name="Scott J.L."/>
            <person name="Geoghagen N.S.M."/>
            <person name="Weidman J.F."/>
            <person name="Fuhrmann J.L."/>
            <person name="Nguyen D."/>
            <person name="Utterback T.R."/>
            <person name="Kelley J.M."/>
            <person name="Peterson J.D."/>
            <person name="Sadow P.W."/>
            <person name="Hanna M.C."/>
            <person name="Cotton M.D."/>
            <person name="Roberts K.M."/>
            <person name="Hurst M.A."/>
            <person name="Kaine B.P."/>
            <person name="Borodovsky M."/>
            <person name="Klenk H.-P."/>
            <person name="Fraser C.M."/>
            <person name="Smith H.O."/>
            <person name="Woese C.R."/>
            <person name="Venter J.C."/>
        </authorList>
    </citation>
    <scope>NUCLEOTIDE SEQUENCE [LARGE SCALE GENOMIC DNA]</scope>
    <source>
        <strain>ATCC 43067 / DSM 2661 / JAL-1 / JCM 10045 / NBRC 100440</strain>
    </source>
</reference>
<comment type="similarity">
    <text evidence="1">To M.thermoautotrophicum MTH862.</text>
</comment>
<accession>Q58583</accession>
<proteinExistence type="predicted"/>